<reference key="1">
    <citation type="submission" date="2007-10" db="EMBL/GenBank/DDBJ databases">
        <title>Complete sequence of chromosome 3 of Burkholderia multivorans ATCC 17616.</title>
        <authorList>
            <person name="Copeland A."/>
            <person name="Lucas S."/>
            <person name="Lapidus A."/>
            <person name="Barry K."/>
            <person name="Glavina del Rio T."/>
            <person name="Dalin E."/>
            <person name="Tice H."/>
            <person name="Pitluck S."/>
            <person name="Chain P."/>
            <person name="Malfatti S."/>
            <person name="Shin M."/>
            <person name="Vergez L."/>
            <person name="Schmutz J."/>
            <person name="Larimer F."/>
            <person name="Land M."/>
            <person name="Hauser L."/>
            <person name="Kyrpides N."/>
            <person name="Kim E."/>
            <person name="Tiedje J."/>
            <person name="Richardson P."/>
        </authorList>
    </citation>
    <scope>NUCLEOTIDE SEQUENCE [LARGE SCALE GENOMIC DNA]</scope>
    <source>
        <strain>ATCC 17616 / 249</strain>
    </source>
</reference>
<reference key="2">
    <citation type="submission" date="2007-04" db="EMBL/GenBank/DDBJ databases">
        <title>Complete genome sequence of Burkholderia multivorans ATCC 17616.</title>
        <authorList>
            <person name="Ohtsubo Y."/>
            <person name="Yamashita A."/>
            <person name="Kurokawa K."/>
            <person name="Takami H."/>
            <person name="Yuhara S."/>
            <person name="Nishiyama E."/>
            <person name="Endo R."/>
            <person name="Miyazaki R."/>
            <person name="Ono A."/>
            <person name="Yano K."/>
            <person name="Ito M."/>
            <person name="Sota M."/>
            <person name="Yuji N."/>
            <person name="Hattori M."/>
            <person name="Tsuda M."/>
        </authorList>
    </citation>
    <scope>NUCLEOTIDE SEQUENCE [LARGE SCALE GENOMIC DNA]</scope>
    <source>
        <strain>ATCC 17616 / 249</strain>
    </source>
</reference>
<protein>
    <recommendedName>
        <fullName evidence="1">UPF0391 membrane protein Bmul_5473/BMULJ_06024</fullName>
    </recommendedName>
</protein>
<sequence>MLRYALIFFVIAIIAAVFGFGGIAAGAAEIAKILFYIFVVIFLVTLLLGVVRR</sequence>
<gene>
    <name type="ordered locus">Bmul_5473</name>
    <name type="ordered locus">BMULJ_06024</name>
</gene>
<accession>A9ATU4</accession>
<feature type="chain" id="PRO_1000143708" description="UPF0391 membrane protein Bmul_5473/BMULJ_06024">
    <location>
        <begin position="1"/>
        <end position="53"/>
    </location>
</feature>
<feature type="transmembrane region" description="Helical" evidence="1">
    <location>
        <begin position="5"/>
        <end position="25"/>
    </location>
</feature>
<feature type="transmembrane region" description="Helical" evidence="1">
    <location>
        <begin position="30"/>
        <end position="50"/>
    </location>
</feature>
<organism>
    <name type="scientific">Burkholderia multivorans (strain ATCC 17616 / 249)</name>
    <dbReference type="NCBI Taxonomy" id="395019"/>
    <lineage>
        <taxon>Bacteria</taxon>
        <taxon>Pseudomonadati</taxon>
        <taxon>Pseudomonadota</taxon>
        <taxon>Betaproteobacteria</taxon>
        <taxon>Burkholderiales</taxon>
        <taxon>Burkholderiaceae</taxon>
        <taxon>Burkholderia</taxon>
        <taxon>Burkholderia cepacia complex</taxon>
    </lineage>
</organism>
<proteinExistence type="inferred from homology"/>
<evidence type="ECO:0000255" key="1">
    <source>
        <dbReference type="HAMAP-Rule" id="MF_01361"/>
    </source>
</evidence>
<name>Y6024_BURM1</name>
<keyword id="KW-1003">Cell membrane</keyword>
<keyword id="KW-0472">Membrane</keyword>
<keyword id="KW-1185">Reference proteome</keyword>
<keyword id="KW-0812">Transmembrane</keyword>
<keyword id="KW-1133">Transmembrane helix</keyword>
<comment type="subcellular location">
    <subcellularLocation>
        <location evidence="1">Cell membrane</location>
        <topology evidence="1">Multi-pass membrane protein</topology>
    </subcellularLocation>
</comment>
<comment type="similarity">
    <text evidence="1">Belongs to the UPF0391 family.</text>
</comment>
<dbReference type="EMBL" id="CP000870">
    <property type="protein sequence ID" value="ABX19143.1"/>
    <property type="molecule type" value="Genomic_DNA"/>
</dbReference>
<dbReference type="EMBL" id="AP009387">
    <property type="protein sequence ID" value="BAG47825.1"/>
    <property type="molecule type" value="Genomic_DNA"/>
</dbReference>
<dbReference type="RefSeq" id="WP_006398937.1">
    <property type="nucleotide sequence ID" value="NC_010801.1"/>
</dbReference>
<dbReference type="STRING" id="395019.BMULJ_06024"/>
<dbReference type="KEGG" id="bmj:BMULJ_06024"/>
<dbReference type="KEGG" id="bmu:Bmul_5473"/>
<dbReference type="eggNOG" id="COG5487">
    <property type="taxonomic scope" value="Bacteria"/>
</dbReference>
<dbReference type="HOGENOM" id="CLU_187346_0_1_4"/>
<dbReference type="Proteomes" id="UP000008815">
    <property type="component" value="Chromosome 3"/>
</dbReference>
<dbReference type="GO" id="GO:0005886">
    <property type="term" value="C:plasma membrane"/>
    <property type="evidence" value="ECO:0007669"/>
    <property type="project" value="UniProtKB-SubCell"/>
</dbReference>
<dbReference type="HAMAP" id="MF_01361">
    <property type="entry name" value="UPF0391"/>
    <property type="match status" value="1"/>
</dbReference>
<dbReference type="InterPro" id="IPR009760">
    <property type="entry name" value="DUF1328"/>
</dbReference>
<dbReference type="NCBIfam" id="NF010226">
    <property type="entry name" value="PRK13682.1-1"/>
    <property type="match status" value="1"/>
</dbReference>
<dbReference type="NCBIfam" id="NF010229">
    <property type="entry name" value="PRK13682.1-4"/>
    <property type="match status" value="1"/>
</dbReference>
<dbReference type="Pfam" id="PF07043">
    <property type="entry name" value="DUF1328"/>
    <property type="match status" value="1"/>
</dbReference>
<dbReference type="PIRSF" id="PIRSF036466">
    <property type="entry name" value="UCP036466"/>
    <property type="match status" value="1"/>
</dbReference>